<sequence>MDLTDDSPDGEVKIHKKDFHHPYTPYPIQEKFMQTVYDVLEQGKIGILESPTGTGKSLSLICGSLTWLRDFKRKEFEGILNDGFENSEEPEWMIEAAKVRKKRELIGRREEMERKLGRIRERERCERDRMSGNGNGNMRGGKRRKVGGDGEGDLVGGSNGSNEDEFLLEDWESDGEIGGSGKKKTGDEAIFSKETLELKKSIGMWKFPSPMPLEEFPSKTTEKDKDNLHEHLRHLPLGSRKNLCINPKVNKLNSVTAINERCAELQQSSTPKEHKCPHLPNKDNKPLVSTFRDHALATIRDIEDMGALGKEISICPYYASRSAIKPAEIVTLPYPLLLQKSAREALGISLKGHVVIIDEAHNLMDAIAGIYGTEMSLKELKLAKEMLGNYFMKFAKRLKGKNRIYVAQAIRVVDSLMGYLMKRLEGTEIDGVVDQKELLAGKGADQIDLFKLIRYLQESKLARKVESYTEHTRNIKQASTIPHNNKETPKSTTPILHTLTSLLLALTHPTTEGQLFFLKSTSTSPSPSPDLITLKFQLLNPAPHFESIVSSARAIILAGGTMSPFSDYTSILFPSIPSHKITTLSCGHVIPKTHLFASTVSRGPTGIPFKWTFANRGNTDMMDELGRVLLNVCTIVPDGVVVFFPSYNFLSTILYRFSIPSSGTGSATATATGTEKGKGKTILERLSEKKPIFQESKEESVETILAAYAKSIAEGKGALLFSVVGGKLSEGINFSDALGRCVMIVGLPFPNMHTAEWKRRLRFIEESAVERLTSFYQEKESNNKDGNGNEEEGNGKKKENREKIQRDQILQQAKGEARDYFENVCMRAVNQCVGRAIRHRGDWAGILLLDERYKGERVVGKLAGWIREGVLRGEGMGMGDAGGFGRLMGGLGRFCRGRREVL</sequence>
<keyword id="KW-0067">ATP-binding</keyword>
<keyword id="KW-0131">Cell cycle</keyword>
<keyword id="KW-0238">DNA-binding</keyword>
<keyword id="KW-0347">Helicase</keyword>
<keyword id="KW-0378">Hydrolase</keyword>
<keyword id="KW-0408">Iron</keyword>
<keyword id="KW-0411">Iron-sulfur</keyword>
<keyword id="KW-0413">Isomerase</keyword>
<keyword id="KW-0479">Metal-binding</keyword>
<keyword id="KW-0547">Nucleotide-binding</keyword>
<keyword id="KW-0539">Nucleus</keyword>
<keyword id="KW-1185">Reference proteome</keyword>
<evidence type="ECO:0000250" key="1">
    <source>
        <dbReference type="UniProtKB" id="P18074"/>
    </source>
</evidence>
<evidence type="ECO:0000250" key="2">
    <source>
        <dbReference type="UniProtKB" id="P22516"/>
    </source>
</evidence>
<evidence type="ECO:0000250" key="3">
    <source>
        <dbReference type="UniProtKB" id="Q96FC9"/>
    </source>
</evidence>
<evidence type="ECO:0000255" key="4">
    <source>
        <dbReference type="PROSITE-ProRule" id="PRU00541"/>
    </source>
</evidence>
<evidence type="ECO:0000256" key="5">
    <source>
        <dbReference type="SAM" id="MobiDB-lite"/>
    </source>
</evidence>
<evidence type="ECO:0000305" key="6"/>
<organism>
    <name type="scientific">Sclerotinia sclerotiorum (strain ATCC 18683 / 1980 / Ss-1)</name>
    <name type="common">White mold</name>
    <name type="synonym">Whetzelinia sclerotiorum</name>
    <dbReference type="NCBI Taxonomy" id="665079"/>
    <lineage>
        <taxon>Eukaryota</taxon>
        <taxon>Fungi</taxon>
        <taxon>Dikarya</taxon>
        <taxon>Ascomycota</taxon>
        <taxon>Pezizomycotina</taxon>
        <taxon>Leotiomycetes</taxon>
        <taxon>Helotiales</taxon>
        <taxon>Sclerotiniaceae</taxon>
        <taxon>Sclerotinia</taxon>
    </lineage>
</organism>
<proteinExistence type="inferred from homology"/>
<name>CHL1_SCLS1</name>
<reference key="1">
    <citation type="journal article" date="2011" name="PLoS Genet.">
        <title>Genomic analysis of the necrotrophic fungal pathogens Sclerotinia sclerotiorum and Botrytis cinerea.</title>
        <authorList>
            <person name="Amselem J."/>
            <person name="Cuomo C.A."/>
            <person name="van Kan J.A.L."/>
            <person name="Viaud M."/>
            <person name="Benito E.P."/>
            <person name="Couloux A."/>
            <person name="Coutinho P.M."/>
            <person name="de Vries R.P."/>
            <person name="Dyer P.S."/>
            <person name="Fillinger S."/>
            <person name="Fournier E."/>
            <person name="Gout L."/>
            <person name="Hahn M."/>
            <person name="Kohn L."/>
            <person name="Lapalu N."/>
            <person name="Plummer K.M."/>
            <person name="Pradier J.-M."/>
            <person name="Quevillon E."/>
            <person name="Sharon A."/>
            <person name="Simon A."/>
            <person name="ten Have A."/>
            <person name="Tudzynski B."/>
            <person name="Tudzynski P."/>
            <person name="Wincker P."/>
            <person name="Andrew M."/>
            <person name="Anthouard V."/>
            <person name="Beever R.E."/>
            <person name="Beffa R."/>
            <person name="Benoit I."/>
            <person name="Bouzid O."/>
            <person name="Brault B."/>
            <person name="Chen Z."/>
            <person name="Choquer M."/>
            <person name="Collemare J."/>
            <person name="Cotton P."/>
            <person name="Danchin E.G."/>
            <person name="Da Silva C."/>
            <person name="Gautier A."/>
            <person name="Giraud C."/>
            <person name="Giraud T."/>
            <person name="Gonzalez C."/>
            <person name="Grossetete S."/>
            <person name="Gueldener U."/>
            <person name="Henrissat B."/>
            <person name="Howlett B.J."/>
            <person name="Kodira C."/>
            <person name="Kretschmer M."/>
            <person name="Lappartient A."/>
            <person name="Leroch M."/>
            <person name="Levis C."/>
            <person name="Mauceli E."/>
            <person name="Neuveglise C."/>
            <person name="Oeser B."/>
            <person name="Pearson M."/>
            <person name="Poulain J."/>
            <person name="Poussereau N."/>
            <person name="Quesneville H."/>
            <person name="Rascle C."/>
            <person name="Schumacher J."/>
            <person name="Segurens B."/>
            <person name="Sexton A."/>
            <person name="Silva E."/>
            <person name="Sirven C."/>
            <person name="Soanes D.M."/>
            <person name="Talbot N.J."/>
            <person name="Templeton M."/>
            <person name="Yandava C."/>
            <person name="Yarden O."/>
            <person name="Zeng Q."/>
            <person name="Rollins J.A."/>
            <person name="Lebrun M.-H."/>
            <person name="Dickman M."/>
        </authorList>
    </citation>
    <scope>NUCLEOTIDE SEQUENCE [LARGE SCALE GENOMIC DNA]</scope>
    <source>
        <strain>ATCC 18683 / 1980 / Ss-1</strain>
    </source>
</reference>
<protein>
    <recommendedName>
        <fullName evidence="2">ATP-dependent DNA helicase CHL1</fullName>
        <ecNumber evidence="3">5.6.2.3</ecNumber>
    </recommendedName>
    <alternativeName>
        <fullName evidence="2">Chromosome loss protein 1</fullName>
    </alternativeName>
    <alternativeName>
        <fullName evidence="6">DNA 5'-3' helicase CHL1</fullName>
    </alternativeName>
</protein>
<feature type="chain" id="PRO_0000351017" description="ATP-dependent DNA helicase CHL1">
    <location>
        <begin position="1"/>
        <end position="902"/>
    </location>
</feature>
<feature type="domain" description="Helicase ATP-binding" evidence="4">
    <location>
        <begin position="15"/>
        <end position="414"/>
    </location>
</feature>
<feature type="region of interest" description="Disordered" evidence="5">
    <location>
        <begin position="128"/>
        <end position="162"/>
    </location>
</feature>
<feature type="region of interest" description="Disordered" evidence="5">
    <location>
        <begin position="775"/>
        <end position="804"/>
    </location>
</feature>
<feature type="short sequence motif" description="DEAH box">
    <location>
        <begin position="358"/>
        <end position="361"/>
    </location>
</feature>
<feature type="compositionally biased region" description="Basic and acidic residues" evidence="5">
    <location>
        <begin position="793"/>
        <end position="804"/>
    </location>
</feature>
<feature type="binding site" evidence="4">
    <location>
        <begin position="50"/>
        <end position="57"/>
    </location>
    <ligand>
        <name>ATP</name>
        <dbReference type="ChEBI" id="CHEBI:30616"/>
    </ligand>
</feature>
<feature type="binding site" evidence="1">
    <location>
        <position position="244"/>
    </location>
    <ligand>
        <name>[4Fe-4S] cluster</name>
        <dbReference type="ChEBI" id="CHEBI:49883"/>
    </ligand>
</feature>
<feature type="binding site" evidence="1">
    <location>
        <position position="262"/>
    </location>
    <ligand>
        <name>[4Fe-4S] cluster</name>
        <dbReference type="ChEBI" id="CHEBI:49883"/>
    </ligand>
</feature>
<feature type="binding site" evidence="1">
    <location>
        <position position="276"/>
    </location>
    <ligand>
        <name>[4Fe-4S] cluster</name>
        <dbReference type="ChEBI" id="CHEBI:49883"/>
    </ligand>
</feature>
<feature type="binding site" evidence="1">
    <location>
        <position position="315"/>
    </location>
    <ligand>
        <name>[4Fe-4S] cluster</name>
        <dbReference type="ChEBI" id="CHEBI:49883"/>
    </ligand>
</feature>
<dbReference type="EC" id="5.6.2.3" evidence="3"/>
<dbReference type="EMBL" id="CH476630">
    <property type="protein sequence ID" value="EDN92053.1"/>
    <property type="molecule type" value="Genomic_DNA"/>
</dbReference>
<dbReference type="RefSeq" id="XP_001591289.1">
    <property type="nucleotide sequence ID" value="XM_001591239.1"/>
</dbReference>
<dbReference type="FunCoup" id="A7ERG1">
    <property type="interactions" value="920"/>
</dbReference>
<dbReference type="STRING" id="665079.A7ERG1"/>
<dbReference type="GeneID" id="5487179"/>
<dbReference type="KEGG" id="ssl:SS1G_07915"/>
<dbReference type="InParanoid" id="A7ERG1"/>
<dbReference type="OMA" id="QTHQFRD"/>
<dbReference type="Proteomes" id="UP000001312">
    <property type="component" value="Unassembled WGS sequence"/>
</dbReference>
<dbReference type="GO" id="GO:0005634">
    <property type="term" value="C:nucleus"/>
    <property type="evidence" value="ECO:0000318"/>
    <property type="project" value="GO_Central"/>
</dbReference>
<dbReference type="GO" id="GO:0005524">
    <property type="term" value="F:ATP binding"/>
    <property type="evidence" value="ECO:0007669"/>
    <property type="project" value="UniProtKB-KW"/>
</dbReference>
<dbReference type="GO" id="GO:0016887">
    <property type="term" value="F:ATP hydrolysis activity"/>
    <property type="evidence" value="ECO:0007669"/>
    <property type="project" value="RHEA"/>
</dbReference>
<dbReference type="GO" id="GO:0003677">
    <property type="term" value="F:DNA binding"/>
    <property type="evidence" value="ECO:0007669"/>
    <property type="project" value="UniProtKB-KW"/>
</dbReference>
<dbReference type="GO" id="GO:0003678">
    <property type="term" value="F:DNA helicase activity"/>
    <property type="evidence" value="ECO:0000318"/>
    <property type="project" value="GO_Central"/>
</dbReference>
<dbReference type="GO" id="GO:0051536">
    <property type="term" value="F:iron-sulfur cluster binding"/>
    <property type="evidence" value="ECO:0007669"/>
    <property type="project" value="UniProtKB-KW"/>
</dbReference>
<dbReference type="GO" id="GO:0046872">
    <property type="term" value="F:metal ion binding"/>
    <property type="evidence" value="ECO:0007669"/>
    <property type="project" value="UniProtKB-KW"/>
</dbReference>
<dbReference type="GO" id="GO:0034085">
    <property type="term" value="P:establishment of sister chromatid cohesion"/>
    <property type="evidence" value="ECO:0000318"/>
    <property type="project" value="GO_Central"/>
</dbReference>
<dbReference type="GO" id="GO:0006139">
    <property type="term" value="P:nucleobase-containing compound metabolic process"/>
    <property type="evidence" value="ECO:0007669"/>
    <property type="project" value="InterPro"/>
</dbReference>
<dbReference type="CDD" id="cd18788">
    <property type="entry name" value="SF2_C_XPD"/>
    <property type="match status" value="1"/>
</dbReference>
<dbReference type="FunFam" id="3.40.50.300:FF:003707">
    <property type="entry name" value="ATP-dependent DNA helicase CHL1"/>
    <property type="match status" value="1"/>
</dbReference>
<dbReference type="Gene3D" id="3.40.50.300">
    <property type="entry name" value="P-loop containing nucleotide triphosphate hydrolases"/>
    <property type="match status" value="3"/>
</dbReference>
<dbReference type="InterPro" id="IPR006555">
    <property type="entry name" value="ATP-dep_Helicase_C"/>
</dbReference>
<dbReference type="InterPro" id="IPR045028">
    <property type="entry name" value="DinG/Rad3-like"/>
</dbReference>
<dbReference type="InterPro" id="IPR014013">
    <property type="entry name" value="Helic_SF1/SF2_ATP-bd_DinG/Rad3"/>
</dbReference>
<dbReference type="InterPro" id="IPR006554">
    <property type="entry name" value="Helicase-like_DEXD_c2"/>
</dbReference>
<dbReference type="InterPro" id="IPR027417">
    <property type="entry name" value="P-loop_NTPase"/>
</dbReference>
<dbReference type="InterPro" id="IPR010614">
    <property type="entry name" value="RAD3-like_helicase_DEAD"/>
</dbReference>
<dbReference type="InterPro" id="IPR013020">
    <property type="entry name" value="Rad3/Chl1-like"/>
</dbReference>
<dbReference type="NCBIfam" id="TIGR00604">
    <property type="entry name" value="rad3"/>
    <property type="match status" value="1"/>
</dbReference>
<dbReference type="PANTHER" id="PTHR11472:SF41">
    <property type="entry name" value="ATP-DEPENDENT DNA HELICASE DDX11-RELATED"/>
    <property type="match status" value="1"/>
</dbReference>
<dbReference type="PANTHER" id="PTHR11472">
    <property type="entry name" value="DNA REPAIR DEAD HELICASE RAD3/XP-D SUBFAMILY MEMBER"/>
    <property type="match status" value="1"/>
</dbReference>
<dbReference type="Pfam" id="PF06733">
    <property type="entry name" value="DEAD_2"/>
    <property type="match status" value="1"/>
</dbReference>
<dbReference type="Pfam" id="PF13307">
    <property type="entry name" value="Helicase_C_2"/>
    <property type="match status" value="2"/>
</dbReference>
<dbReference type="SMART" id="SM00488">
    <property type="entry name" value="DEXDc2"/>
    <property type="match status" value="1"/>
</dbReference>
<dbReference type="SMART" id="SM00491">
    <property type="entry name" value="HELICc2"/>
    <property type="match status" value="1"/>
</dbReference>
<dbReference type="SUPFAM" id="SSF52540">
    <property type="entry name" value="P-loop containing nucleoside triphosphate hydrolases"/>
    <property type="match status" value="1"/>
</dbReference>
<dbReference type="PROSITE" id="PS00690">
    <property type="entry name" value="DEAH_ATP_HELICASE"/>
    <property type="match status" value="1"/>
</dbReference>
<dbReference type="PROSITE" id="PS51193">
    <property type="entry name" value="HELICASE_ATP_BIND_2"/>
    <property type="match status" value="1"/>
</dbReference>
<comment type="function">
    <text evidence="2">ATP-dependent DNA helicase important for chromosome transmission and normal cell cycle progression in G(2)/M (By similarity). May have a role in changing DNA topology to allow the loading of proteins involved in maintaining sister chromatid cohesion in the vicinity of the centromeres (By similarity). Has a specific role in chromosome segregation during meiosis II (By similarity).</text>
</comment>
<comment type="catalytic activity">
    <reaction evidence="3">
        <text>Couples ATP hydrolysis with the unwinding of duplex DNA at the replication fork by translocating in the 5'-3' direction. This creates two antiparallel DNA single strands (ssDNA). The leading ssDNA polymer is the template for DNA polymerase III holoenzyme which synthesizes a continuous strand.</text>
        <dbReference type="EC" id="5.6.2.3"/>
    </reaction>
</comment>
<comment type="catalytic activity">
    <reaction evidence="3">
        <text>ATP + H2O = ADP + phosphate + H(+)</text>
        <dbReference type="Rhea" id="RHEA:13065"/>
        <dbReference type="ChEBI" id="CHEBI:15377"/>
        <dbReference type="ChEBI" id="CHEBI:15378"/>
        <dbReference type="ChEBI" id="CHEBI:30616"/>
        <dbReference type="ChEBI" id="CHEBI:43474"/>
        <dbReference type="ChEBI" id="CHEBI:456216"/>
        <dbReference type="EC" id="5.6.2.3"/>
    </reaction>
</comment>
<comment type="cofactor">
    <cofactor evidence="1">
        <name>[4Fe-4S] cluster</name>
        <dbReference type="ChEBI" id="CHEBI:49883"/>
    </cofactor>
    <text evidence="1">Binds 1 [4Fe-4S] cluster.</text>
</comment>
<comment type="subcellular location">
    <subcellularLocation>
        <location evidence="2">Nucleus</location>
    </subcellularLocation>
</comment>
<comment type="similarity">
    <text evidence="6">Belongs to the DEAD box helicase family. DEAH subfamily. DDX11/CHL1 sub-subfamily.</text>
</comment>
<gene>
    <name type="primary">CHL1</name>
    <name type="ORF">SS1G_07915</name>
</gene>
<accession>A7ERG1</accession>